<keyword id="KW-0021">Allosteric enzyme</keyword>
<keyword id="KW-0067">ATP-binding</keyword>
<keyword id="KW-0324">Glycolysis</keyword>
<keyword id="KW-0418">Kinase</keyword>
<keyword id="KW-0460">Magnesium</keyword>
<keyword id="KW-0479">Metal-binding</keyword>
<keyword id="KW-0547">Nucleotide-binding</keyword>
<keyword id="KW-0670">Pyruvate</keyword>
<keyword id="KW-1185">Reference proteome</keyword>
<keyword id="KW-0808">Transferase</keyword>
<comment type="function">
    <text evidence="6">Catalyzes the formation of pyruvate in the last step of glycolysis, it is irreversible under physiological conditions. The reaction is critical for the control of metabolic flux in the second part of glycolysis.</text>
</comment>
<comment type="catalytic activity">
    <reaction evidence="5">
        <text>pyruvate + ATP = phosphoenolpyruvate + ADP + H(+)</text>
        <dbReference type="Rhea" id="RHEA:18157"/>
        <dbReference type="ChEBI" id="CHEBI:15361"/>
        <dbReference type="ChEBI" id="CHEBI:15378"/>
        <dbReference type="ChEBI" id="CHEBI:30616"/>
        <dbReference type="ChEBI" id="CHEBI:58702"/>
        <dbReference type="ChEBI" id="CHEBI:456216"/>
        <dbReference type="EC" id="2.7.1.40"/>
    </reaction>
    <physiologicalReaction direction="right-to-left" evidence="6">
        <dbReference type="Rhea" id="RHEA:18159"/>
    </physiologicalReaction>
</comment>
<comment type="cofactor">
    <cofactor evidence="5">
        <name>Mg(2+)</name>
        <dbReference type="ChEBI" id="CHEBI:18420"/>
    </cofactor>
</comment>
<comment type="cofactor">
    <cofactor evidence="1">
        <name>K(+)</name>
        <dbReference type="ChEBI" id="CHEBI:29103"/>
    </cofactor>
</comment>
<comment type="activity regulation">
    <text evidence="5">Allosterically activated by AMP and by several sugar phosphates. Belongs to type II PK.</text>
</comment>
<comment type="biophysicochemical properties">
    <kinetics>
        <KM evidence="5">0.16 mM for ADP</KM>
    </kinetics>
    <phDependence>
        <text evidence="5">Optimum pH is 4.0-6.8.</text>
    </phDependence>
</comment>
<comment type="pathway">
    <text>Carbohydrate degradation; glycolysis; pyruvate from D-glyceraldehyde 3-phosphate: step 5/5.</text>
</comment>
<comment type="subunit">
    <text evidence="5">Homotetramer.</text>
</comment>
<comment type="similarity">
    <text evidence="6">Belongs to the pyruvate kinase family.</text>
</comment>
<accession>Q8ZNW0</accession>
<gene>
    <name type="primary">pykA</name>
    <name type="ordered locus">STM1888</name>
</gene>
<proteinExistence type="evidence at protein level"/>
<dbReference type="EC" id="2.7.1.40" evidence="5"/>
<dbReference type="EMBL" id="AE006468">
    <property type="protein sequence ID" value="AAL20804.1"/>
    <property type="molecule type" value="Genomic_DNA"/>
</dbReference>
<dbReference type="RefSeq" id="NP_460845.1">
    <property type="nucleotide sequence ID" value="NC_003197.2"/>
</dbReference>
<dbReference type="SMR" id="Q8ZNW0"/>
<dbReference type="STRING" id="99287.STM1888"/>
<dbReference type="PaxDb" id="99287-STM1888"/>
<dbReference type="GeneID" id="1253409"/>
<dbReference type="KEGG" id="stm:STM1888"/>
<dbReference type="PATRIC" id="fig|99287.12.peg.2002"/>
<dbReference type="HOGENOM" id="CLU_015439_0_2_6"/>
<dbReference type="OMA" id="RVHHIGE"/>
<dbReference type="PhylomeDB" id="Q8ZNW0"/>
<dbReference type="BioCyc" id="SENT99287:STM1888-MONOMER"/>
<dbReference type="UniPathway" id="UPA00109">
    <property type="reaction ID" value="UER00188"/>
</dbReference>
<dbReference type="Proteomes" id="UP000001014">
    <property type="component" value="Chromosome"/>
</dbReference>
<dbReference type="GO" id="GO:0005737">
    <property type="term" value="C:cytoplasm"/>
    <property type="evidence" value="ECO:0000318"/>
    <property type="project" value="GO_Central"/>
</dbReference>
<dbReference type="GO" id="GO:0005829">
    <property type="term" value="C:cytosol"/>
    <property type="evidence" value="ECO:0000318"/>
    <property type="project" value="GO_Central"/>
</dbReference>
<dbReference type="GO" id="GO:0005524">
    <property type="term" value="F:ATP binding"/>
    <property type="evidence" value="ECO:0007669"/>
    <property type="project" value="UniProtKB-KW"/>
</dbReference>
<dbReference type="GO" id="GO:0016301">
    <property type="term" value="F:kinase activity"/>
    <property type="evidence" value="ECO:0007669"/>
    <property type="project" value="UniProtKB-KW"/>
</dbReference>
<dbReference type="GO" id="GO:0000287">
    <property type="term" value="F:magnesium ion binding"/>
    <property type="evidence" value="ECO:0007669"/>
    <property type="project" value="InterPro"/>
</dbReference>
<dbReference type="GO" id="GO:0030955">
    <property type="term" value="F:potassium ion binding"/>
    <property type="evidence" value="ECO:0007669"/>
    <property type="project" value="InterPro"/>
</dbReference>
<dbReference type="GO" id="GO:0004743">
    <property type="term" value="F:pyruvate kinase activity"/>
    <property type="evidence" value="ECO:0000318"/>
    <property type="project" value="GO_Central"/>
</dbReference>
<dbReference type="GO" id="GO:0006096">
    <property type="term" value="P:glycolytic process"/>
    <property type="evidence" value="ECO:0000318"/>
    <property type="project" value="GO_Central"/>
</dbReference>
<dbReference type="CDD" id="cd00288">
    <property type="entry name" value="Pyruvate_Kinase"/>
    <property type="match status" value="1"/>
</dbReference>
<dbReference type="FunFam" id="2.40.33.10:FF:000002">
    <property type="entry name" value="Pyruvate kinase"/>
    <property type="match status" value="1"/>
</dbReference>
<dbReference type="FunFam" id="3.40.1380.20:FF:000004">
    <property type="entry name" value="Pyruvate kinase"/>
    <property type="match status" value="1"/>
</dbReference>
<dbReference type="Gene3D" id="3.20.20.60">
    <property type="entry name" value="Phosphoenolpyruvate-binding domains"/>
    <property type="match status" value="1"/>
</dbReference>
<dbReference type="Gene3D" id="2.40.33.10">
    <property type="entry name" value="PK beta-barrel domain-like"/>
    <property type="match status" value="1"/>
</dbReference>
<dbReference type="Gene3D" id="3.40.1380.20">
    <property type="entry name" value="Pyruvate kinase, C-terminal domain"/>
    <property type="match status" value="1"/>
</dbReference>
<dbReference type="InterPro" id="IPR001697">
    <property type="entry name" value="Pyr_Knase"/>
</dbReference>
<dbReference type="InterPro" id="IPR015813">
    <property type="entry name" value="Pyrv/PenolPyrv_kinase-like_dom"/>
</dbReference>
<dbReference type="InterPro" id="IPR040442">
    <property type="entry name" value="Pyrv_kinase-like_dom_sf"/>
</dbReference>
<dbReference type="InterPro" id="IPR011037">
    <property type="entry name" value="Pyrv_Knase-like_insert_dom_sf"/>
</dbReference>
<dbReference type="InterPro" id="IPR018209">
    <property type="entry name" value="Pyrv_Knase_AS"/>
</dbReference>
<dbReference type="InterPro" id="IPR015793">
    <property type="entry name" value="Pyrv_Knase_brl"/>
</dbReference>
<dbReference type="InterPro" id="IPR015795">
    <property type="entry name" value="Pyrv_Knase_C"/>
</dbReference>
<dbReference type="InterPro" id="IPR036918">
    <property type="entry name" value="Pyrv_Knase_C_sf"/>
</dbReference>
<dbReference type="InterPro" id="IPR015806">
    <property type="entry name" value="Pyrv_Knase_insert_dom_sf"/>
</dbReference>
<dbReference type="NCBIfam" id="NF004491">
    <property type="entry name" value="PRK05826.1"/>
    <property type="match status" value="1"/>
</dbReference>
<dbReference type="NCBIfam" id="TIGR01064">
    <property type="entry name" value="pyruv_kin"/>
    <property type="match status" value="1"/>
</dbReference>
<dbReference type="PANTHER" id="PTHR11817">
    <property type="entry name" value="PYRUVATE KINASE"/>
    <property type="match status" value="1"/>
</dbReference>
<dbReference type="Pfam" id="PF00224">
    <property type="entry name" value="PK"/>
    <property type="match status" value="1"/>
</dbReference>
<dbReference type="Pfam" id="PF02887">
    <property type="entry name" value="PK_C"/>
    <property type="match status" value="1"/>
</dbReference>
<dbReference type="PRINTS" id="PR01050">
    <property type="entry name" value="PYRUVTKNASE"/>
</dbReference>
<dbReference type="SUPFAM" id="SSF51621">
    <property type="entry name" value="Phosphoenolpyruvate/pyruvate domain"/>
    <property type="match status" value="1"/>
</dbReference>
<dbReference type="SUPFAM" id="SSF50800">
    <property type="entry name" value="PK beta-barrel domain-like"/>
    <property type="match status" value="1"/>
</dbReference>
<dbReference type="SUPFAM" id="SSF52935">
    <property type="entry name" value="PK C-terminal domain-like"/>
    <property type="match status" value="1"/>
</dbReference>
<dbReference type="PROSITE" id="PS00110">
    <property type="entry name" value="PYRUVATE_KINASE"/>
    <property type="match status" value="1"/>
</dbReference>
<protein>
    <recommendedName>
        <fullName>Pyruvate kinase II</fullName>
        <ecNumber evidence="5">2.7.1.40</ecNumber>
    </recommendedName>
    <alternativeName>
        <fullName>PK-2</fullName>
    </alternativeName>
</protein>
<name>KPYK2_SALTY</name>
<organism>
    <name type="scientific">Salmonella typhimurium (strain LT2 / SGSC1412 / ATCC 700720)</name>
    <dbReference type="NCBI Taxonomy" id="99287"/>
    <lineage>
        <taxon>Bacteria</taxon>
        <taxon>Pseudomonadati</taxon>
        <taxon>Pseudomonadota</taxon>
        <taxon>Gammaproteobacteria</taxon>
        <taxon>Enterobacterales</taxon>
        <taxon>Enterobacteriaceae</taxon>
        <taxon>Salmonella</taxon>
    </lineage>
</organism>
<evidence type="ECO:0000250" key="1"/>
<evidence type="ECO:0000250" key="2">
    <source>
        <dbReference type="UniProtKB" id="P00549"/>
    </source>
</evidence>
<evidence type="ECO:0000250" key="3">
    <source>
        <dbReference type="UniProtKB" id="P14618"/>
    </source>
</evidence>
<evidence type="ECO:0000250" key="4">
    <source>
        <dbReference type="UniProtKB" id="P30613"/>
    </source>
</evidence>
<evidence type="ECO:0000269" key="5">
    <source>
    </source>
</evidence>
<evidence type="ECO:0000305" key="6"/>
<reference key="1">
    <citation type="journal article" date="2001" name="Nature">
        <title>Complete genome sequence of Salmonella enterica serovar Typhimurium LT2.</title>
        <authorList>
            <person name="McClelland M."/>
            <person name="Sanderson K.E."/>
            <person name="Spieth J."/>
            <person name="Clifton S.W."/>
            <person name="Latreille P."/>
            <person name="Courtney L."/>
            <person name="Porwollik S."/>
            <person name="Ali J."/>
            <person name="Dante M."/>
            <person name="Du F."/>
            <person name="Hou S."/>
            <person name="Layman D."/>
            <person name="Leonard S."/>
            <person name="Nguyen C."/>
            <person name="Scott K."/>
            <person name="Holmes A."/>
            <person name="Grewal N."/>
            <person name="Mulvaney E."/>
            <person name="Ryan E."/>
            <person name="Sun H."/>
            <person name="Florea L."/>
            <person name="Miller W."/>
            <person name="Stoneking T."/>
            <person name="Nhan M."/>
            <person name="Waterston R."/>
            <person name="Wilson R.K."/>
        </authorList>
    </citation>
    <scope>NUCLEOTIDE SEQUENCE [LARGE SCALE GENOMIC DNA]</scope>
    <source>
        <strain>LT2 / SGSC1412 / ATCC 700720</strain>
    </source>
</reference>
<reference key="2">
    <citation type="journal article" date="1987" name="Biochem. J.">
        <title>Purification and kinetic properties of pyruvate kinase isoenzymes of Salmonella typhimurium.</title>
        <authorList>
            <person name="Garcia-Olalla C."/>
            <person name="Garrido-Pertierra A."/>
        </authorList>
    </citation>
    <scope>FUNCTION</scope>
    <scope>CATALYTIC ACTIVITY</scope>
    <scope>MAGNESIUM COFACTOR</scope>
    <scope>ACTIVITY REGULATION</scope>
    <scope>BIOPHYSICOCHEMICAL PROPERTIES</scope>
    <scope>SUBUNIT</scope>
    <source>
        <strain>LT2 / SGSC1412 / ATCC 700720</strain>
    </source>
</reference>
<sequence length="480" mass="51387">MSRRLRRTKIVTTLGPATDRDNNLEKVIAAGANVVRMNFSHGSPEDHKMRADKVREIAAKLGRHVAILGDLQGPKIRVSTFKEGKVFLNIGDKFLLDANLGKGEGDKEKVGIDYKGLPADVVPGDILLLDDGRVQLKVLEVQGMKVFTEVTVGGPLSNNKGINKLGGGLSAEALTEKDKADIQTAALIGVDYLAVSFPRCGEDLNYARRLARDAGCDAKIVAKVERAEAVCDQNAMDDIILASDVVMVARGDLGVEIGDPELVGIQKALIRRARQLNRAVITATQMMESMITNPMPTRAEVMDVANAVLDGTDAVMLSAETAAGQYPSETVAAMARVCLGAEKIPSINVSKHRLDVQFDNVEEAIAMSAMYAANHLKGVTAIITMTESGRTALMTSRISSGLPIFAMSRHERTLNLTALYRGVTPVHFDSAADGVVAAHEAVNLLRDKGYLVSGDLVIVTQGDVMSTVGSTNTTRILTVE</sequence>
<feature type="initiator methionine" description="Removed" evidence="1">
    <location>
        <position position="1"/>
    </location>
</feature>
<feature type="chain" id="PRO_0000112074" description="Pyruvate kinase II">
    <location>
        <begin position="2"/>
        <end position="480"/>
    </location>
</feature>
<feature type="binding site" evidence="4">
    <location>
        <position position="36"/>
    </location>
    <ligand>
        <name>substrate</name>
    </ligand>
</feature>
<feature type="binding site" evidence="3">
    <location>
        <begin position="38"/>
        <end position="41"/>
    </location>
    <ligand>
        <name>ATP</name>
        <dbReference type="ChEBI" id="CHEBI:30616"/>
    </ligand>
</feature>
<feature type="binding site" evidence="4">
    <location>
        <position position="38"/>
    </location>
    <ligand>
        <name>K(+)</name>
        <dbReference type="ChEBI" id="CHEBI:29103"/>
    </ligand>
</feature>
<feature type="binding site" evidence="4">
    <location>
        <position position="40"/>
    </location>
    <ligand>
        <name>K(+)</name>
        <dbReference type="ChEBI" id="CHEBI:29103"/>
    </ligand>
</feature>
<feature type="binding site" evidence="4">
    <location>
        <position position="70"/>
    </location>
    <ligand>
        <name>K(+)</name>
        <dbReference type="ChEBI" id="CHEBI:29103"/>
    </ligand>
</feature>
<feature type="binding site" evidence="3">
    <location>
        <position position="77"/>
    </location>
    <ligand>
        <name>ATP</name>
        <dbReference type="ChEBI" id="CHEBI:30616"/>
    </ligand>
</feature>
<feature type="binding site" evidence="3">
    <location>
        <position position="160"/>
    </location>
    <ligand>
        <name>ATP</name>
        <dbReference type="ChEBI" id="CHEBI:30616"/>
    </ligand>
</feature>
<feature type="binding site" evidence="4">
    <location>
        <position position="223"/>
    </location>
    <ligand>
        <name>substrate</name>
    </ligand>
</feature>
<feature type="binding site" evidence="4">
    <location>
        <position position="225"/>
    </location>
    <ligand>
        <name>Mg(2+)</name>
        <dbReference type="ChEBI" id="CHEBI:18420"/>
    </ligand>
</feature>
<feature type="binding site" evidence="4">
    <location>
        <position position="251"/>
    </location>
    <ligand>
        <name>substrate</name>
    </ligand>
</feature>
<feature type="binding site" evidence="4">
    <location>
        <position position="252"/>
    </location>
    <ligand>
        <name>Mg(2+)</name>
        <dbReference type="ChEBI" id="CHEBI:18420"/>
    </ligand>
</feature>
<feature type="binding site" evidence="4">
    <location>
        <position position="252"/>
    </location>
    <ligand>
        <name>substrate</name>
    </ligand>
</feature>
<feature type="binding site" evidence="4">
    <location>
        <position position="284"/>
    </location>
    <ligand>
        <name>substrate</name>
    </ligand>
</feature>
<feature type="site" description="Transition state stabilizer" evidence="2">
    <location>
        <position position="223"/>
    </location>
</feature>